<dbReference type="EC" id="3.1.21.10" evidence="1"/>
<dbReference type="EMBL" id="CP001600">
    <property type="protein sequence ID" value="ACR68781.1"/>
    <property type="molecule type" value="Genomic_DNA"/>
</dbReference>
<dbReference type="RefSeq" id="WP_015870938.1">
    <property type="nucleotide sequence ID" value="NZ_CP169062.1"/>
</dbReference>
<dbReference type="SMR" id="C5B9T0"/>
<dbReference type="STRING" id="67780.B6E78_01180"/>
<dbReference type="GeneID" id="69538574"/>
<dbReference type="KEGG" id="eic:NT01EI_1597"/>
<dbReference type="PATRIC" id="fig|634503.3.peg.1429"/>
<dbReference type="HOGENOM" id="CLU_091257_2_1_6"/>
<dbReference type="OrthoDB" id="9805499at2"/>
<dbReference type="Proteomes" id="UP000001485">
    <property type="component" value="Chromosome"/>
</dbReference>
<dbReference type="GO" id="GO:0005737">
    <property type="term" value="C:cytoplasm"/>
    <property type="evidence" value="ECO:0007669"/>
    <property type="project" value="UniProtKB-SubCell"/>
</dbReference>
<dbReference type="GO" id="GO:0048476">
    <property type="term" value="C:Holliday junction resolvase complex"/>
    <property type="evidence" value="ECO:0007669"/>
    <property type="project" value="UniProtKB-UniRule"/>
</dbReference>
<dbReference type="GO" id="GO:0008821">
    <property type="term" value="F:crossover junction DNA endonuclease activity"/>
    <property type="evidence" value="ECO:0007669"/>
    <property type="project" value="UniProtKB-UniRule"/>
</dbReference>
<dbReference type="GO" id="GO:0003677">
    <property type="term" value="F:DNA binding"/>
    <property type="evidence" value="ECO:0007669"/>
    <property type="project" value="UniProtKB-KW"/>
</dbReference>
<dbReference type="GO" id="GO:0000287">
    <property type="term" value="F:magnesium ion binding"/>
    <property type="evidence" value="ECO:0007669"/>
    <property type="project" value="UniProtKB-UniRule"/>
</dbReference>
<dbReference type="GO" id="GO:0006310">
    <property type="term" value="P:DNA recombination"/>
    <property type="evidence" value="ECO:0007669"/>
    <property type="project" value="UniProtKB-UniRule"/>
</dbReference>
<dbReference type="GO" id="GO:0006281">
    <property type="term" value="P:DNA repair"/>
    <property type="evidence" value="ECO:0007669"/>
    <property type="project" value="UniProtKB-UniRule"/>
</dbReference>
<dbReference type="CDD" id="cd16962">
    <property type="entry name" value="RuvC"/>
    <property type="match status" value="1"/>
</dbReference>
<dbReference type="FunFam" id="3.30.420.10:FF:000002">
    <property type="entry name" value="Crossover junction endodeoxyribonuclease RuvC"/>
    <property type="match status" value="1"/>
</dbReference>
<dbReference type="Gene3D" id="3.30.420.10">
    <property type="entry name" value="Ribonuclease H-like superfamily/Ribonuclease H"/>
    <property type="match status" value="1"/>
</dbReference>
<dbReference type="HAMAP" id="MF_00034">
    <property type="entry name" value="RuvC"/>
    <property type="match status" value="1"/>
</dbReference>
<dbReference type="InterPro" id="IPR012337">
    <property type="entry name" value="RNaseH-like_sf"/>
</dbReference>
<dbReference type="InterPro" id="IPR036397">
    <property type="entry name" value="RNaseH_sf"/>
</dbReference>
<dbReference type="InterPro" id="IPR020563">
    <property type="entry name" value="X-over_junc_endoDNase_Mg_BS"/>
</dbReference>
<dbReference type="InterPro" id="IPR002176">
    <property type="entry name" value="X-over_junc_endoDNase_RuvC"/>
</dbReference>
<dbReference type="NCBIfam" id="TIGR00228">
    <property type="entry name" value="ruvC"/>
    <property type="match status" value="1"/>
</dbReference>
<dbReference type="PANTHER" id="PTHR30194">
    <property type="entry name" value="CROSSOVER JUNCTION ENDODEOXYRIBONUCLEASE RUVC"/>
    <property type="match status" value="1"/>
</dbReference>
<dbReference type="PANTHER" id="PTHR30194:SF3">
    <property type="entry name" value="CROSSOVER JUNCTION ENDODEOXYRIBONUCLEASE RUVC"/>
    <property type="match status" value="1"/>
</dbReference>
<dbReference type="Pfam" id="PF02075">
    <property type="entry name" value="RuvC"/>
    <property type="match status" value="1"/>
</dbReference>
<dbReference type="PRINTS" id="PR00696">
    <property type="entry name" value="RSOLVASERUVC"/>
</dbReference>
<dbReference type="SUPFAM" id="SSF53098">
    <property type="entry name" value="Ribonuclease H-like"/>
    <property type="match status" value="1"/>
</dbReference>
<dbReference type="PROSITE" id="PS01321">
    <property type="entry name" value="RUVC"/>
    <property type="match status" value="1"/>
</dbReference>
<accession>C5B9T0</accession>
<feature type="chain" id="PRO_1000202035" description="Crossover junction endodeoxyribonuclease RuvC">
    <location>
        <begin position="1"/>
        <end position="173"/>
    </location>
</feature>
<feature type="active site" evidence="1">
    <location>
        <position position="8"/>
    </location>
</feature>
<feature type="active site" evidence="1">
    <location>
        <position position="67"/>
    </location>
</feature>
<feature type="active site" evidence="1">
    <location>
        <position position="139"/>
    </location>
</feature>
<feature type="binding site" evidence="1">
    <location>
        <position position="8"/>
    </location>
    <ligand>
        <name>Mg(2+)</name>
        <dbReference type="ChEBI" id="CHEBI:18420"/>
        <label>1</label>
    </ligand>
</feature>
<feature type="binding site" evidence="1">
    <location>
        <position position="67"/>
    </location>
    <ligand>
        <name>Mg(2+)</name>
        <dbReference type="ChEBI" id="CHEBI:18420"/>
        <label>2</label>
    </ligand>
</feature>
<feature type="binding site" evidence="1">
    <location>
        <position position="139"/>
    </location>
    <ligand>
        <name>Mg(2+)</name>
        <dbReference type="ChEBI" id="CHEBI:18420"/>
        <label>1</label>
    </ligand>
</feature>
<name>RUVC_EDWI9</name>
<comment type="function">
    <text evidence="1">The RuvA-RuvB-RuvC complex processes Holliday junction (HJ) DNA during genetic recombination and DNA repair. Endonuclease that resolves HJ intermediates. Cleaves cruciform DNA by making single-stranded nicks across the HJ at symmetrical positions within the homologous arms, yielding a 5'-phosphate and a 3'-hydroxyl group; requires a central core of homology in the junction. The consensus cleavage sequence is 5'-(A/T)TT(C/G)-3'. Cleavage occurs on the 3'-side of the TT dinucleotide at the point of strand exchange. HJ branch migration catalyzed by RuvA-RuvB allows RuvC to scan DNA until it finds its consensus sequence, where it cleaves and resolves the cruciform DNA.</text>
</comment>
<comment type="catalytic activity">
    <reaction evidence="1">
        <text>Endonucleolytic cleavage at a junction such as a reciprocal single-stranded crossover between two homologous DNA duplexes (Holliday junction).</text>
        <dbReference type="EC" id="3.1.21.10"/>
    </reaction>
</comment>
<comment type="cofactor">
    <cofactor evidence="1">
        <name>Mg(2+)</name>
        <dbReference type="ChEBI" id="CHEBI:18420"/>
    </cofactor>
    <text evidence="1">Binds 2 Mg(2+) ion per subunit.</text>
</comment>
<comment type="subunit">
    <text evidence="1">Homodimer which binds Holliday junction (HJ) DNA. The HJ becomes 2-fold symmetrical on binding to RuvC with unstacked arms; it has a different conformation from HJ DNA in complex with RuvA. In the full resolvosome a probable DNA-RuvA(4)-RuvB(12)-RuvC(2) complex forms which resolves the HJ.</text>
</comment>
<comment type="subcellular location">
    <subcellularLocation>
        <location evidence="1">Cytoplasm</location>
    </subcellularLocation>
</comment>
<comment type="similarity">
    <text evidence="1">Belongs to the RuvC family.</text>
</comment>
<reference key="1">
    <citation type="submission" date="2009-03" db="EMBL/GenBank/DDBJ databases">
        <title>Complete genome sequence of Edwardsiella ictaluri 93-146.</title>
        <authorList>
            <person name="Williams M.L."/>
            <person name="Gillaspy A.F."/>
            <person name="Dyer D.W."/>
            <person name="Thune R.L."/>
            <person name="Waldbieser G.C."/>
            <person name="Schuster S.C."/>
            <person name="Gipson J."/>
            <person name="Zaitshik J."/>
            <person name="Landry C."/>
            <person name="Lawrence M.L."/>
        </authorList>
    </citation>
    <scope>NUCLEOTIDE SEQUENCE [LARGE SCALE GENOMIC DNA]</scope>
    <source>
        <strain>93-146</strain>
    </source>
</reference>
<gene>
    <name evidence="1" type="primary">ruvC</name>
    <name type="ordered locus">NT01EI_1597</name>
</gene>
<organism>
    <name type="scientific">Edwardsiella ictaluri (strain 93-146)</name>
    <dbReference type="NCBI Taxonomy" id="634503"/>
    <lineage>
        <taxon>Bacteria</taxon>
        <taxon>Pseudomonadati</taxon>
        <taxon>Pseudomonadota</taxon>
        <taxon>Gammaproteobacteria</taxon>
        <taxon>Enterobacterales</taxon>
        <taxon>Hafniaceae</taxon>
        <taxon>Edwardsiella</taxon>
    </lineage>
</organism>
<evidence type="ECO:0000255" key="1">
    <source>
        <dbReference type="HAMAP-Rule" id="MF_00034"/>
    </source>
</evidence>
<keyword id="KW-0963">Cytoplasm</keyword>
<keyword id="KW-0227">DNA damage</keyword>
<keyword id="KW-0233">DNA recombination</keyword>
<keyword id="KW-0234">DNA repair</keyword>
<keyword id="KW-0238">DNA-binding</keyword>
<keyword id="KW-0255">Endonuclease</keyword>
<keyword id="KW-0378">Hydrolase</keyword>
<keyword id="KW-0460">Magnesium</keyword>
<keyword id="KW-0479">Metal-binding</keyword>
<keyword id="KW-0540">Nuclease</keyword>
<proteinExistence type="inferred from homology"/>
<protein>
    <recommendedName>
        <fullName evidence="1">Crossover junction endodeoxyribonuclease RuvC</fullName>
        <ecNumber evidence="1">3.1.21.10</ecNumber>
    </recommendedName>
    <alternativeName>
        <fullName evidence="1">Holliday junction nuclease RuvC</fullName>
    </alternativeName>
    <alternativeName>
        <fullName evidence="1">Holliday junction resolvase RuvC</fullName>
    </alternativeName>
</protein>
<sequence>MSIILGIDPGSRITGYGVIRQQGRQLEYIGSGCIRTAVDDLPTRLKLVYAGVSEIITQFNPDCFAIEQVFMAKNADSALKLGQARGAAIVAAVNRDLPVFEYAARQIKQTVVGNGGAEKAQVQHMVRSLLKLPANPQADAADALAVAITHCHVSQNALRISSGRLNLARGRLR</sequence>